<dbReference type="PIR" id="A41509">
    <property type="entry name" value="A41509"/>
</dbReference>
<dbReference type="SMR" id="P07290"/>
<dbReference type="EnsemblMetazoa" id="XM_021516371.1">
    <property type="protein sequence ID" value="XP_021372046.1"/>
    <property type="gene ID" value="LOC110462421"/>
</dbReference>
<dbReference type="OrthoDB" id="26525at2759"/>
<dbReference type="GO" id="GO:0005859">
    <property type="term" value="C:muscle myosin complex"/>
    <property type="evidence" value="ECO:0007669"/>
    <property type="project" value="TreeGrafter"/>
</dbReference>
<dbReference type="GO" id="GO:0005509">
    <property type="term" value="F:calcium ion binding"/>
    <property type="evidence" value="ECO:0007669"/>
    <property type="project" value="InterPro"/>
</dbReference>
<dbReference type="CDD" id="cd00051">
    <property type="entry name" value="EFh"/>
    <property type="match status" value="1"/>
</dbReference>
<dbReference type="FunFam" id="1.10.238.10:FF:000003">
    <property type="entry name" value="Calmodulin A"/>
    <property type="match status" value="1"/>
</dbReference>
<dbReference type="Gene3D" id="1.10.238.10">
    <property type="entry name" value="EF-hand"/>
    <property type="match status" value="2"/>
</dbReference>
<dbReference type="InterPro" id="IPR050230">
    <property type="entry name" value="CALM/Myosin/TropC-like"/>
</dbReference>
<dbReference type="InterPro" id="IPR011992">
    <property type="entry name" value="EF-hand-dom_pair"/>
</dbReference>
<dbReference type="InterPro" id="IPR002048">
    <property type="entry name" value="EF_hand_dom"/>
</dbReference>
<dbReference type="PANTHER" id="PTHR23048">
    <property type="entry name" value="MYOSIN LIGHT CHAIN 1, 3"/>
    <property type="match status" value="1"/>
</dbReference>
<dbReference type="PANTHER" id="PTHR23048:SF33">
    <property type="entry name" value="MYOSIN LIGHT CHAIN ALKALI"/>
    <property type="match status" value="1"/>
</dbReference>
<dbReference type="Pfam" id="PF13499">
    <property type="entry name" value="EF-hand_7"/>
    <property type="match status" value="1"/>
</dbReference>
<dbReference type="SMART" id="SM00054">
    <property type="entry name" value="EFh"/>
    <property type="match status" value="1"/>
</dbReference>
<dbReference type="SUPFAM" id="SSF47473">
    <property type="entry name" value="EF-hand"/>
    <property type="match status" value="1"/>
</dbReference>
<dbReference type="PROSITE" id="PS50222">
    <property type="entry name" value="EF_HAND_2"/>
    <property type="match status" value="2"/>
</dbReference>
<reference key="1">
    <citation type="journal article" date="1987" name="J. Biochem.">
        <title>Amino acid sequence of the essential light chain of adductor muscle myosin from Ezo giant scallop, Patinopecten yessoensis.</title>
        <authorList>
            <person name="Maita T."/>
            <person name="Konno K."/>
            <person name="Maruta S."/>
            <person name="Norisue H."/>
            <person name="Matsuda G."/>
        </authorList>
    </citation>
    <scope>PROTEIN SEQUENCE</scope>
</reference>
<feature type="chain" id="PRO_0000198722" description="Myosin, essential light chain, adductor muscle">
    <location>
        <begin position="1"/>
        <end position="156"/>
    </location>
</feature>
<feature type="domain" description="EF-hand 1" evidence="1">
    <location>
        <begin position="6"/>
        <end position="43"/>
    </location>
</feature>
<feature type="domain" description="EF-hand 2" evidence="1">
    <location>
        <begin position="81"/>
        <end position="116"/>
    </location>
</feature>
<protein>
    <recommendedName>
        <fullName>Myosin, essential light chain, adductor muscle</fullName>
    </recommendedName>
    <alternativeName>
        <fullName>Sulfhydryl light chain</fullName>
        <shortName>SHLC</shortName>
    </alternativeName>
</protein>
<evidence type="ECO:0000255" key="1">
    <source>
        <dbReference type="PROSITE-ProRule" id="PRU00448"/>
    </source>
</evidence>
<name>MLE_MIZYE</name>
<keyword id="KW-0903">Direct protein sequencing</keyword>
<keyword id="KW-0505">Motor protein</keyword>
<keyword id="KW-0514">Muscle protein</keyword>
<keyword id="KW-0518">Myosin</keyword>
<keyword id="KW-0677">Repeat</keyword>
<accession>P07290</accession>
<organism>
    <name type="scientific">Mizuhopecten yessoensis</name>
    <name type="common">Japanese scallop</name>
    <name type="synonym">Patinopecten yessoensis</name>
    <dbReference type="NCBI Taxonomy" id="6573"/>
    <lineage>
        <taxon>Eukaryota</taxon>
        <taxon>Metazoa</taxon>
        <taxon>Spiralia</taxon>
        <taxon>Lophotrochozoa</taxon>
        <taxon>Mollusca</taxon>
        <taxon>Bivalvia</taxon>
        <taxon>Autobranchia</taxon>
        <taxon>Pteriomorphia</taxon>
        <taxon>Pectinida</taxon>
        <taxon>Pectinoidea</taxon>
        <taxon>Pectinidae</taxon>
        <taxon>Mizuhopecten</taxon>
    </lineage>
</organism>
<sequence>PKLSQDEIDDLKDVFELFDFWDGRDGAVDAFKLGDVCRCLGINPRNDDVFAVGGTHKMGEKSLPFEEFLPAYEGLMDCEQGTFADYMEAFKTFDREGQGFISGAELRHVLTALGERLTDEEIDEIISLTDLQEDLEGNVKYEDFVKKVMAGPYPDK</sequence>
<proteinExistence type="evidence at protein level"/>
<comment type="function">
    <text>In molluscan muscle, calcium regulation is associated with myosin rather than with actin. Muscle myosin contains two types of light chains: the catalytic light chain, essential for ATPase activity, and the regulatory light chain, a calcium-binding protein responsible for Ca(2+) dependent binding and Ca(2+) dependent Mg-ATPase activity.</text>
</comment>